<protein>
    <recommendedName>
        <fullName evidence="1">Aspartate carbamoyltransferase catalytic subunit</fullName>
        <ecNumber evidence="1">2.1.3.2</ecNumber>
    </recommendedName>
    <alternativeName>
        <fullName evidence="1">Aspartate transcarbamylase</fullName>
        <shortName evidence="1">ATCase</shortName>
    </alternativeName>
</protein>
<keyword id="KW-0665">Pyrimidine biosynthesis</keyword>
<keyword id="KW-0808">Transferase</keyword>
<comment type="function">
    <text evidence="1">Catalyzes the condensation of carbamoyl phosphate and aspartate to form carbamoyl aspartate and inorganic phosphate, the committed step in the de novo pyrimidine nucleotide biosynthesis pathway.</text>
</comment>
<comment type="catalytic activity">
    <reaction evidence="1">
        <text>carbamoyl phosphate + L-aspartate = N-carbamoyl-L-aspartate + phosphate + H(+)</text>
        <dbReference type="Rhea" id="RHEA:20013"/>
        <dbReference type="ChEBI" id="CHEBI:15378"/>
        <dbReference type="ChEBI" id="CHEBI:29991"/>
        <dbReference type="ChEBI" id="CHEBI:32814"/>
        <dbReference type="ChEBI" id="CHEBI:43474"/>
        <dbReference type="ChEBI" id="CHEBI:58228"/>
        <dbReference type="EC" id="2.1.3.2"/>
    </reaction>
</comment>
<comment type="pathway">
    <text evidence="1">Pyrimidine metabolism; UMP biosynthesis via de novo pathway; (S)-dihydroorotate from bicarbonate: step 2/3.</text>
</comment>
<comment type="subunit">
    <text evidence="1">Heterododecamer (2C3:3R2) of six catalytic PyrB chains organized as two trimers (C3), and six regulatory PyrI chains organized as three dimers (R2).</text>
</comment>
<comment type="similarity">
    <text evidence="1">Belongs to the aspartate/ornithine carbamoyltransferase superfamily. ATCase family.</text>
</comment>
<organism>
    <name type="scientific">Mycolicibacterium vanbaalenii (strain DSM 7251 / JCM 13017 / BCRC 16820 / KCTC 9966 / NRRL B-24157 / PYR-1)</name>
    <name type="common">Mycobacterium vanbaalenii</name>
    <dbReference type="NCBI Taxonomy" id="350058"/>
    <lineage>
        <taxon>Bacteria</taxon>
        <taxon>Bacillati</taxon>
        <taxon>Actinomycetota</taxon>
        <taxon>Actinomycetes</taxon>
        <taxon>Mycobacteriales</taxon>
        <taxon>Mycobacteriaceae</taxon>
        <taxon>Mycolicibacterium</taxon>
    </lineage>
</organism>
<proteinExistence type="inferred from homology"/>
<name>PYRB_MYCVP</name>
<dbReference type="EC" id="2.1.3.2" evidence="1"/>
<dbReference type="EMBL" id="CP000511">
    <property type="protein sequence ID" value="ABM13467.1"/>
    <property type="molecule type" value="Genomic_DNA"/>
</dbReference>
<dbReference type="RefSeq" id="WP_011779876.1">
    <property type="nucleotide sequence ID" value="NZ_JACKSD010000003.1"/>
</dbReference>
<dbReference type="SMR" id="A1T8G7"/>
<dbReference type="STRING" id="350058.Mvan_2660"/>
<dbReference type="KEGG" id="mva:Mvan_2660"/>
<dbReference type="eggNOG" id="COG0540">
    <property type="taxonomic scope" value="Bacteria"/>
</dbReference>
<dbReference type="HOGENOM" id="CLU_043846_2_0_11"/>
<dbReference type="UniPathway" id="UPA00070">
    <property type="reaction ID" value="UER00116"/>
</dbReference>
<dbReference type="Proteomes" id="UP000009159">
    <property type="component" value="Chromosome"/>
</dbReference>
<dbReference type="GO" id="GO:0005829">
    <property type="term" value="C:cytosol"/>
    <property type="evidence" value="ECO:0007669"/>
    <property type="project" value="TreeGrafter"/>
</dbReference>
<dbReference type="GO" id="GO:0016597">
    <property type="term" value="F:amino acid binding"/>
    <property type="evidence" value="ECO:0007669"/>
    <property type="project" value="InterPro"/>
</dbReference>
<dbReference type="GO" id="GO:0004070">
    <property type="term" value="F:aspartate carbamoyltransferase activity"/>
    <property type="evidence" value="ECO:0007669"/>
    <property type="project" value="UniProtKB-UniRule"/>
</dbReference>
<dbReference type="GO" id="GO:0006207">
    <property type="term" value="P:'de novo' pyrimidine nucleobase biosynthetic process"/>
    <property type="evidence" value="ECO:0007669"/>
    <property type="project" value="InterPro"/>
</dbReference>
<dbReference type="GO" id="GO:0044205">
    <property type="term" value="P:'de novo' UMP biosynthetic process"/>
    <property type="evidence" value="ECO:0007669"/>
    <property type="project" value="UniProtKB-UniRule"/>
</dbReference>
<dbReference type="GO" id="GO:0006520">
    <property type="term" value="P:amino acid metabolic process"/>
    <property type="evidence" value="ECO:0007669"/>
    <property type="project" value="InterPro"/>
</dbReference>
<dbReference type="FunFam" id="3.40.50.1370:FF:000007">
    <property type="entry name" value="Aspartate carbamoyltransferase"/>
    <property type="match status" value="1"/>
</dbReference>
<dbReference type="Gene3D" id="3.40.50.1370">
    <property type="entry name" value="Aspartate/ornithine carbamoyltransferase"/>
    <property type="match status" value="2"/>
</dbReference>
<dbReference type="HAMAP" id="MF_00001">
    <property type="entry name" value="Asp_carb_tr"/>
    <property type="match status" value="1"/>
</dbReference>
<dbReference type="InterPro" id="IPR006132">
    <property type="entry name" value="Asp/Orn_carbamoyltranf_P-bd"/>
</dbReference>
<dbReference type="InterPro" id="IPR006130">
    <property type="entry name" value="Asp/Orn_carbamoylTrfase"/>
</dbReference>
<dbReference type="InterPro" id="IPR036901">
    <property type="entry name" value="Asp/Orn_carbamoylTrfase_sf"/>
</dbReference>
<dbReference type="InterPro" id="IPR002082">
    <property type="entry name" value="Asp_carbamoyltransf"/>
</dbReference>
<dbReference type="InterPro" id="IPR006131">
    <property type="entry name" value="Asp_carbamoyltransf_Asp/Orn-bd"/>
</dbReference>
<dbReference type="NCBIfam" id="TIGR00670">
    <property type="entry name" value="asp_carb_tr"/>
    <property type="match status" value="1"/>
</dbReference>
<dbReference type="NCBIfam" id="NF002032">
    <property type="entry name" value="PRK00856.1"/>
    <property type="match status" value="1"/>
</dbReference>
<dbReference type="PANTHER" id="PTHR45753:SF6">
    <property type="entry name" value="ASPARTATE CARBAMOYLTRANSFERASE"/>
    <property type="match status" value="1"/>
</dbReference>
<dbReference type="PANTHER" id="PTHR45753">
    <property type="entry name" value="ORNITHINE CARBAMOYLTRANSFERASE, MITOCHONDRIAL"/>
    <property type="match status" value="1"/>
</dbReference>
<dbReference type="Pfam" id="PF00185">
    <property type="entry name" value="OTCace"/>
    <property type="match status" value="1"/>
</dbReference>
<dbReference type="Pfam" id="PF02729">
    <property type="entry name" value="OTCace_N"/>
    <property type="match status" value="1"/>
</dbReference>
<dbReference type="PRINTS" id="PR00100">
    <property type="entry name" value="AOTCASE"/>
</dbReference>
<dbReference type="PRINTS" id="PR00101">
    <property type="entry name" value="ATCASE"/>
</dbReference>
<dbReference type="SUPFAM" id="SSF53671">
    <property type="entry name" value="Aspartate/ornithine carbamoyltransferase"/>
    <property type="match status" value="1"/>
</dbReference>
<dbReference type="PROSITE" id="PS00097">
    <property type="entry name" value="CARBAMOYLTRANSFERASE"/>
    <property type="match status" value="1"/>
</dbReference>
<evidence type="ECO:0000255" key="1">
    <source>
        <dbReference type="HAMAP-Rule" id="MF_00001"/>
    </source>
</evidence>
<sequence>MKHLLTAADLSREDATAILDNADRFREALVGREVKKLPTLRGRTIITMFYENSTRTRVSFEVAGKWMSADVINVSSSGSSVAKGESLRDTALTLRAAGADALIIRHPASGAAQQLAAWTLDEHGGPSIINAGDGTHEHPTQALLDALTIRQRLGSVEGKRVVIVGDVLHSRVARSNVALLHTLGAEVVLVAPPTLLPVGVADWPVTVSQDIDAELPLADAVLMLRVQAERMNGGFFPSSREYSVRYGLSEKRQSRLAEHAVVLHPGPMLRGMEIAYSVADSSQSAVLQQVSNGVHVRMAVLFHLLVGSEQEAISA</sequence>
<reference key="1">
    <citation type="submission" date="2006-12" db="EMBL/GenBank/DDBJ databases">
        <title>Complete sequence of Mycobacterium vanbaalenii PYR-1.</title>
        <authorList>
            <consortium name="US DOE Joint Genome Institute"/>
            <person name="Copeland A."/>
            <person name="Lucas S."/>
            <person name="Lapidus A."/>
            <person name="Barry K."/>
            <person name="Detter J.C."/>
            <person name="Glavina del Rio T."/>
            <person name="Hammon N."/>
            <person name="Israni S."/>
            <person name="Dalin E."/>
            <person name="Tice H."/>
            <person name="Pitluck S."/>
            <person name="Singan V."/>
            <person name="Schmutz J."/>
            <person name="Larimer F."/>
            <person name="Land M."/>
            <person name="Hauser L."/>
            <person name="Kyrpides N."/>
            <person name="Anderson I.J."/>
            <person name="Miller C."/>
            <person name="Richardson P."/>
        </authorList>
    </citation>
    <scope>NUCLEOTIDE SEQUENCE [LARGE SCALE GENOMIC DNA]</scope>
    <source>
        <strain>DSM 7251 / JCM 13017 / BCRC 16820 / KCTC 9966 / NRRL B-24157 / PYR-1</strain>
    </source>
</reference>
<feature type="chain" id="PRO_0000301594" description="Aspartate carbamoyltransferase catalytic subunit">
    <location>
        <begin position="1"/>
        <end position="315"/>
    </location>
</feature>
<feature type="binding site" evidence="1">
    <location>
        <position position="55"/>
    </location>
    <ligand>
        <name>carbamoyl phosphate</name>
        <dbReference type="ChEBI" id="CHEBI:58228"/>
    </ligand>
</feature>
<feature type="binding site" evidence="1">
    <location>
        <position position="56"/>
    </location>
    <ligand>
        <name>carbamoyl phosphate</name>
        <dbReference type="ChEBI" id="CHEBI:58228"/>
    </ligand>
</feature>
<feature type="binding site" evidence="1">
    <location>
        <position position="83"/>
    </location>
    <ligand>
        <name>L-aspartate</name>
        <dbReference type="ChEBI" id="CHEBI:29991"/>
    </ligand>
</feature>
<feature type="binding site" evidence="1">
    <location>
        <position position="105"/>
    </location>
    <ligand>
        <name>carbamoyl phosphate</name>
        <dbReference type="ChEBI" id="CHEBI:58228"/>
    </ligand>
</feature>
<feature type="binding site" evidence="1">
    <location>
        <position position="138"/>
    </location>
    <ligand>
        <name>carbamoyl phosphate</name>
        <dbReference type="ChEBI" id="CHEBI:58228"/>
    </ligand>
</feature>
<feature type="binding site" evidence="1">
    <location>
        <position position="141"/>
    </location>
    <ligand>
        <name>carbamoyl phosphate</name>
        <dbReference type="ChEBI" id="CHEBI:58228"/>
    </ligand>
</feature>
<feature type="binding site" evidence="1">
    <location>
        <position position="171"/>
    </location>
    <ligand>
        <name>L-aspartate</name>
        <dbReference type="ChEBI" id="CHEBI:29991"/>
    </ligand>
</feature>
<feature type="binding site" evidence="1">
    <location>
        <position position="225"/>
    </location>
    <ligand>
        <name>L-aspartate</name>
        <dbReference type="ChEBI" id="CHEBI:29991"/>
    </ligand>
</feature>
<feature type="binding site" evidence="1">
    <location>
        <position position="266"/>
    </location>
    <ligand>
        <name>carbamoyl phosphate</name>
        <dbReference type="ChEBI" id="CHEBI:58228"/>
    </ligand>
</feature>
<feature type="binding site" evidence="1">
    <location>
        <position position="267"/>
    </location>
    <ligand>
        <name>carbamoyl phosphate</name>
        <dbReference type="ChEBI" id="CHEBI:58228"/>
    </ligand>
</feature>
<accession>A1T8G7</accession>
<gene>
    <name evidence="1" type="primary">pyrB</name>
    <name type="ordered locus">Mvan_2660</name>
</gene>